<proteinExistence type="inferred from homology"/>
<organism>
    <name type="scientific">Listeria monocytogenes serotype 4b (strain F2365)</name>
    <dbReference type="NCBI Taxonomy" id="265669"/>
    <lineage>
        <taxon>Bacteria</taxon>
        <taxon>Bacillati</taxon>
        <taxon>Bacillota</taxon>
        <taxon>Bacilli</taxon>
        <taxon>Bacillales</taxon>
        <taxon>Listeriaceae</taxon>
        <taxon>Listeria</taxon>
    </lineage>
</organism>
<protein>
    <recommendedName>
        <fullName evidence="1">N-acetyl-gamma-glutamyl-phosphate reductase</fullName>
        <shortName evidence="1">AGPR</shortName>
        <ecNumber evidence="1">1.2.1.38</ecNumber>
    </recommendedName>
    <alternativeName>
        <fullName evidence="1">N-acetyl-glutamate semialdehyde dehydrogenase</fullName>
        <shortName evidence="1">NAGSA dehydrogenase</shortName>
    </alternativeName>
</protein>
<gene>
    <name evidence="1" type="primary">argC</name>
    <name type="ordered locus">LMOf2365_1613</name>
</gene>
<keyword id="KW-0028">Amino-acid biosynthesis</keyword>
<keyword id="KW-0055">Arginine biosynthesis</keyword>
<keyword id="KW-0963">Cytoplasm</keyword>
<keyword id="KW-0521">NADP</keyword>
<keyword id="KW-0560">Oxidoreductase</keyword>
<feature type="chain" id="PRO_0000112418" description="N-acetyl-gamma-glutamyl-phosphate reductase">
    <location>
        <begin position="1"/>
        <end position="343"/>
    </location>
</feature>
<feature type="active site" evidence="1">
    <location>
        <position position="147"/>
    </location>
</feature>
<comment type="function">
    <text evidence="1">Catalyzes the NADPH-dependent reduction of N-acetyl-5-glutamyl phosphate to yield N-acetyl-L-glutamate 5-semialdehyde.</text>
</comment>
<comment type="catalytic activity">
    <reaction evidence="1">
        <text>N-acetyl-L-glutamate 5-semialdehyde + phosphate + NADP(+) = N-acetyl-L-glutamyl 5-phosphate + NADPH + H(+)</text>
        <dbReference type="Rhea" id="RHEA:21588"/>
        <dbReference type="ChEBI" id="CHEBI:15378"/>
        <dbReference type="ChEBI" id="CHEBI:29123"/>
        <dbReference type="ChEBI" id="CHEBI:43474"/>
        <dbReference type="ChEBI" id="CHEBI:57783"/>
        <dbReference type="ChEBI" id="CHEBI:57936"/>
        <dbReference type="ChEBI" id="CHEBI:58349"/>
        <dbReference type="EC" id="1.2.1.38"/>
    </reaction>
</comment>
<comment type="pathway">
    <text evidence="1">Amino-acid biosynthesis; L-arginine biosynthesis; N(2)-acetyl-L-ornithine from L-glutamate: step 3/4.</text>
</comment>
<comment type="subcellular location">
    <subcellularLocation>
        <location evidence="1">Cytoplasm</location>
    </subcellularLocation>
</comment>
<comment type="similarity">
    <text evidence="1">Belongs to the NAGSA dehydrogenase family. Type 1 subfamily.</text>
</comment>
<reference key="1">
    <citation type="journal article" date="2004" name="Nucleic Acids Res.">
        <title>Whole genome comparisons of serotype 4b and 1/2a strains of the food-borne pathogen Listeria monocytogenes reveal new insights into the core genome components of this species.</title>
        <authorList>
            <person name="Nelson K.E."/>
            <person name="Fouts D.E."/>
            <person name="Mongodin E.F."/>
            <person name="Ravel J."/>
            <person name="DeBoy R.T."/>
            <person name="Kolonay J.F."/>
            <person name="Rasko D.A."/>
            <person name="Angiuoli S.V."/>
            <person name="Gill S.R."/>
            <person name="Paulsen I.T."/>
            <person name="Peterson J.D."/>
            <person name="White O."/>
            <person name="Nelson W.C."/>
            <person name="Nierman W.C."/>
            <person name="Beanan M.J."/>
            <person name="Brinkac L.M."/>
            <person name="Daugherty S.C."/>
            <person name="Dodson R.J."/>
            <person name="Durkin A.S."/>
            <person name="Madupu R."/>
            <person name="Haft D.H."/>
            <person name="Selengut J."/>
            <person name="Van Aken S.E."/>
            <person name="Khouri H.M."/>
            <person name="Fedorova N."/>
            <person name="Forberger H.A."/>
            <person name="Tran B."/>
            <person name="Kathariou S."/>
            <person name="Wonderling L.D."/>
            <person name="Uhlich G.A."/>
            <person name="Bayles D.O."/>
            <person name="Luchansky J.B."/>
            <person name="Fraser C.M."/>
        </authorList>
    </citation>
    <scope>NUCLEOTIDE SEQUENCE [LARGE SCALE GENOMIC DNA]</scope>
    <source>
        <strain>F2365</strain>
    </source>
</reference>
<dbReference type="EC" id="1.2.1.38" evidence="1"/>
<dbReference type="EMBL" id="AE017262">
    <property type="protein sequence ID" value="AAT04388.1"/>
    <property type="molecule type" value="Genomic_DNA"/>
</dbReference>
<dbReference type="RefSeq" id="WP_003726002.1">
    <property type="nucleotide sequence ID" value="NC_002973.6"/>
</dbReference>
<dbReference type="SMR" id="Q71Z76"/>
<dbReference type="KEGG" id="lmf:LMOf2365_1613"/>
<dbReference type="HOGENOM" id="CLU_006384_0_1_9"/>
<dbReference type="UniPathway" id="UPA00068">
    <property type="reaction ID" value="UER00108"/>
</dbReference>
<dbReference type="GO" id="GO:0005737">
    <property type="term" value="C:cytoplasm"/>
    <property type="evidence" value="ECO:0007669"/>
    <property type="project" value="UniProtKB-SubCell"/>
</dbReference>
<dbReference type="GO" id="GO:0003942">
    <property type="term" value="F:N-acetyl-gamma-glutamyl-phosphate reductase activity"/>
    <property type="evidence" value="ECO:0007669"/>
    <property type="project" value="UniProtKB-UniRule"/>
</dbReference>
<dbReference type="GO" id="GO:0051287">
    <property type="term" value="F:NAD binding"/>
    <property type="evidence" value="ECO:0007669"/>
    <property type="project" value="InterPro"/>
</dbReference>
<dbReference type="GO" id="GO:0070401">
    <property type="term" value="F:NADP+ binding"/>
    <property type="evidence" value="ECO:0007669"/>
    <property type="project" value="InterPro"/>
</dbReference>
<dbReference type="GO" id="GO:0006526">
    <property type="term" value="P:L-arginine biosynthetic process"/>
    <property type="evidence" value="ECO:0007669"/>
    <property type="project" value="UniProtKB-UniRule"/>
</dbReference>
<dbReference type="CDD" id="cd23934">
    <property type="entry name" value="AGPR_1_C"/>
    <property type="match status" value="1"/>
</dbReference>
<dbReference type="CDD" id="cd17895">
    <property type="entry name" value="AGPR_1_N"/>
    <property type="match status" value="1"/>
</dbReference>
<dbReference type="FunFam" id="3.30.360.10:FF:000014">
    <property type="entry name" value="N-acetyl-gamma-glutamyl-phosphate reductase"/>
    <property type="match status" value="1"/>
</dbReference>
<dbReference type="Gene3D" id="3.30.360.10">
    <property type="entry name" value="Dihydrodipicolinate Reductase, domain 2"/>
    <property type="match status" value="1"/>
</dbReference>
<dbReference type="Gene3D" id="3.40.50.720">
    <property type="entry name" value="NAD(P)-binding Rossmann-like Domain"/>
    <property type="match status" value="1"/>
</dbReference>
<dbReference type="HAMAP" id="MF_00150">
    <property type="entry name" value="ArgC_type1"/>
    <property type="match status" value="1"/>
</dbReference>
<dbReference type="InterPro" id="IPR023013">
    <property type="entry name" value="AGPR_AS"/>
</dbReference>
<dbReference type="InterPro" id="IPR000706">
    <property type="entry name" value="AGPR_type-1"/>
</dbReference>
<dbReference type="InterPro" id="IPR036291">
    <property type="entry name" value="NAD(P)-bd_dom_sf"/>
</dbReference>
<dbReference type="InterPro" id="IPR050085">
    <property type="entry name" value="NAGSA_dehydrogenase"/>
</dbReference>
<dbReference type="InterPro" id="IPR000534">
    <property type="entry name" value="Semialdehyde_DH_NAD-bd"/>
</dbReference>
<dbReference type="NCBIfam" id="TIGR01850">
    <property type="entry name" value="argC"/>
    <property type="match status" value="1"/>
</dbReference>
<dbReference type="PANTHER" id="PTHR32338:SF10">
    <property type="entry name" value="N-ACETYL-GAMMA-GLUTAMYL-PHOSPHATE REDUCTASE, CHLOROPLASTIC-RELATED"/>
    <property type="match status" value="1"/>
</dbReference>
<dbReference type="PANTHER" id="PTHR32338">
    <property type="entry name" value="N-ACETYL-GAMMA-GLUTAMYL-PHOSPHATE REDUCTASE, CHLOROPLASTIC-RELATED-RELATED"/>
    <property type="match status" value="1"/>
</dbReference>
<dbReference type="Pfam" id="PF01118">
    <property type="entry name" value="Semialdhyde_dh"/>
    <property type="match status" value="1"/>
</dbReference>
<dbReference type="Pfam" id="PF22698">
    <property type="entry name" value="Semialdhyde_dhC_1"/>
    <property type="match status" value="1"/>
</dbReference>
<dbReference type="SMART" id="SM00859">
    <property type="entry name" value="Semialdhyde_dh"/>
    <property type="match status" value="1"/>
</dbReference>
<dbReference type="SUPFAM" id="SSF55347">
    <property type="entry name" value="Glyceraldehyde-3-phosphate dehydrogenase-like, C-terminal domain"/>
    <property type="match status" value="1"/>
</dbReference>
<dbReference type="SUPFAM" id="SSF51735">
    <property type="entry name" value="NAD(P)-binding Rossmann-fold domains"/>
    <property type="match status" value="1"/>
</dbReference>
<dbReference type="PROSITE" id="PS01224">
    <property type="entry name" value="ARGC"/>
    <property type="match status" value="1"/>
</dbReference>
<name>ARGC_LISMF</name>
<accession>Q71Z76</accession>
<evidence type="ECO:0000255" key="1">
    <source>
        <dbReference type="HAMAP-Rule" id="MF_00150"/>
    </source>
</evidence>
<sequence>MKVSIIGATGYGGLELIRLLHQHASVDIATLHSFSAQSETLATFYPHLKDLEASPLEKINSAEIIEKSDTVFIATPSGIAKDIALPYVDAGLNVIDLSGDFRLKDRQLYEKWYGKSAAPIEYIAKAEYGLAEFRDKKEARFIANPGCYATATLLGIAPLVISQLIDPTSIIVDAKSGISGAGKVPSASTHFTETNENMTLYKMNSHQHIPEIMQQLTKWDETIPAIQFSTSLIPITRGIFTTIYVKPKNPITQKELHTLYKSTYENAPFVRIQPENVYPTVKQVTASNYCDIGLAYNEKTNVITIVSVIDNLVKGAAGQAIQNLNIMANFAESDGLRFIPVYP</sequence>